<reference key="1">
    <citation type="journal article" date="2008" name="Genome Res.">
        <title>Comparative genome analysis of Salmonella enteritidis PT4 and Salmonella gallinarum 287/91 provides insights into evolutionary and host adaptation pathways.</title>
        <authorList>
            <person name="Thomson N.R."/>
            <person name="Clayton D.J."/>
            <person name="Windhorst D."/>
            <person name="Vernikos G."/>
            <person name="Davidson S."/>
            <person name="Churcher C."/>
            <person name="Quail M.A."/>
            <person name="Stevens M."/>
            <person name="Jones M.A."/>
            <person name="Watson M."/>
            <person name="Barron A."/>
            <person name="Layton A."/>
            <person name="Pickard D."/>
            <person name="Kingsley R.A."/>
            <person name="Bignell A."/>
            <person name="Clark L."/>
            <person name="Harris B."/>
            <person name="Ormond D."/>
            <person name="Abdellah Z."/>
            <person name="Brooks K."/>
            <person name="Cherevach I."/>
            <person name="Chillingworth T."/>
            <person name="Woodward J."/>
            <person name="Norberczak H."/>
            <person name="Lord A."/>
            <person name="Arrowsmith C."/>
            <person name="Jagels K."/>
            <person name="Moule S."/>
            <person name="Mungall K."/>
            <person name="Saunders M."/>
            <person name="Whitehead S."/>
            <person name="Chabalgoity J.A."/>
            <person name="Maskell D."/>
            <person name="Humphreys T."/>
            <person name="Roberts M."/>
            <person name="Barrow P.A."/>
            <person name="Dougan G."/>
            <person name="Parkhill J."/>
        </authorList>
    </citation>
    <scope>NUCLEOTIDE SEQUENCE [LARGE SCALE GENOMIC DNA]</scope>
    <source>
        <strain>P125109</strain>
    </source>
</reference>
<protein>
    <recommendedName>
        <fullName evidence="1">Protease HtpX</fullName>
        <ecNumber evidence="1">3.4.24.-</ecNumber>
    </recommendedName>
    <alternativeName>
        <fullName evidence="1">Heat shock protein HtpX</fullName>
    </alternativeName>
</protein>
<keyword id="KW-0997">Cell inner membrane</keyword>
<keyword id="KW-1003">Cell membrane</keyword>
<keyword id="KW-0378">Hydrolase</keyword>
<keyword id="KW-0472">Membrane</keyword>
<keyword id="KW-0479">Metal-binding</keyword>
<keyword id="KW-0482">Metalloprotease</keyword>
<keyword id="KW-0645">Protease</keyword>
<keyword id="KW-0346">Stress response</keyword>
<keyword id="KW-0812">Transmembrane</keyword>
<keyword id="KW-1133">Transmembrane helix</keyword>
<keyword id="KW-0862">Zinc</keyword>
<name>HTPX_SALEP</name>
<sequence>MMRIALFLLTNLAVMVVFGLVLSLTGIQSSSVQGLLIMALLFGFGGSFISLLMSKWMALKSVGGEVIEQPRNERERWLMNTVATQARQAGIAMPQVAIYHAPDINAFATGARRDASLVAVSTGLLQNMSPDEAEAVIAHEISHIANGDMVTMTLIQGVVNTFVIFISRIIAQIAAGFLGGNRDEGEGSNGNPLIYFAVATVLELVFGILASIITMWFSRYREFHADAGSAKLVGREKMIAALQRLKTSYEPQEATSMMAFCINGKSKSLSELFMTHPPLDKRIEALRSGEYLK</sequence>
<dbReference type="EC" id="3.4.24.-" evidence="1"/>
<dbReference type="EMBL" id="AM933172">
    <property type="protein sequence ID" value="CAR32774.1"/>
    <property type="molecule type" value="Genomic_DNA"/>
</dbReference>
<dbReference type="RefSeq" id="WP_000984498.1">
    <property type="nucleotide sequence ID" value="NC_011294.1"/>
</dbReference>
<dbReference type="SMR" id="B5R2S7"/>
<dbReference type="MEROPS" id="M48.002"/>
<dbReference type="GeneID" id="66756319"/>
<dbReference type="KEGG" id="set:SEN1193"/>
<dbReference type="HOGENOM" id="CLU_042266_1_0_6"/>
<dbReference type="Proteomes" id="UP000000613">
    <property type="component" value="Chromosome"/>
</dbReference>
<dbReference type="GO" id="GO:0005886">
    <property type="term" value="C:plasma membrane"/>
    <property type="evidence" value="ECO:0007669"/>
    <property type="project" value="UniProtKB-SubCell"/>
</dbReference>
<dbReference type="GO" id="GO:0004222">
    <property type="term" value="F:metalloendopeptidase activity"/>
    <property type="evidence" value="ECO:0007669"/>
    <property type="project" value="UniProtKB-UniRule"/>
</dbReference>
<dbReference type="GO" id="GO:0008270">
    <property type="term" value="F:zinc ion binding"/>
    <property type="evidence" value="ECO:0007669"/>
    <property type="project" value="UniProtKB-UniRule"/>
</dbReference>
<dbReference type="GO" id="GO:0006508">
    <property type="term" value="P:proteolysis"/>
    <property type="evidence" value="ECO:0007669"/>
    <property type="project" value="UniProtKB-KW"/>
</dbReference>
<dbReference type="CDD" id="cd07335">
    <property type="entry name" value="M48B_HtpX_like"/>
    <property type="match status" value="1"/>
</dbReference>
<dbReference type="FunFam" id="3.30.2010.10:FF:000001">
    <property type="entry name" value="Protease HtpX"/>
    <property type="match status" value="1"/>
</dbReference>
<dbReference type="Gene3D" id="3.30.2010.10">
    <property type="entry name" value="Metalloproteases ('zincins'), catalytic domain"/>
    <property type="match status" value="1"/>
</dbReference>
<dbReference type="HAMAP" id="MF_00188">
    <property type="entry name" value="Pept_M48_protease_HtpX"/>
    <property type="match status" value="1"/>
</dbReference>
<dbReference type="InterPro" id="IPR050083">
    <property type="entry name" value="HtpX_protease"/>
</dbReference>
<dbReference type="InterPro" id="IPR022919">
    <property type="entry name" value="Pept_M48_protease_HtpX"/>
</dbReference>
<dbReference type="InterPro" id="IPR001915">
    <property type="entry name" value="Peptidase_M48"/>
</dbReference>
<dbReference type="NCBIfam" id="NF003965">
    <property type="entry name" value="PRK05457.1"/>
    <property type="match status" value="1"/>
</dbReference>
<dbReference type="PANTHER" id="PTHR43221">
    <property type="entry name" value="PROTEASE HTPX"/>
    <property type="match status" value="1"/>
</dbReference>
<dbReference type="PANTHER" id="PTHR43221:SF1">
    <property type="entry name" value="PROTEASE HTPX"/>
    <property type="match status" value="1"/>
</dbReference>
<dbReference type="Pfam" id="PF01435">
    <property type="entry name" value="Peptidase_M48"/>
    <property type="match status" value="1"/>
</dbReference>
<evidence type="ECO:0000255" key="1">
    <source>
        <dbReference type="HAMAP-Rule" id="MF_00188"/>
    </source>
</evidence>
<feature type="chain" id="PRO_1000098841" description="Protease HtpX">
    <location>
        <begin position="1"/>
        <end position="293"/>
    </location>
</feature>
<feature type="transmembrane region" description="Helical" evidence="1">
    <location>
        <begin position="4"/>
        <end position="24"/>
    </location>
</feature>
<feature type="transmembrane region" description="Helical" evidence="1">
    <location>
        <begin position="34"/>
        <end position="54"/>
    </location>
</feature>
<feature type="transmembrane region" description="Helical" evidence="1">
    <location>
        <begin position="158"/>
        <end position="178"/>
    </location>
</feature>
<feature type="transmembrane region" description="Helical" evidence="1">
    <location>
        <begin position="193"/>
        <end position="213"/>
    </location>
</feature>
<feature type="active site" evidence="1">
    <location>
        <position position="140"/>
    </location>
</feature>
<feature type="binding site" evidence="1">
    <location>
        <position position="139"/>
    </location>
    <ligand>
        <name>Zn(2+)</name>
        <dbReference type="ChEBI" id="CHEBI:29105"/>
        <note>catalytic</note>
    </ligand>
</feature>
<feature type="binding site" evidence="1">
    <location>
        <position position="143"/>
    </location>
    <ligand>
        <name>Zn(2+)</name>
        <dbReference type="ChEBI" id="CHEBI:29105"/>
        <note>catalytic</note>
    </ligand>
</feature>
<feature type="binding site" evidence="1">
    <location>
        <position position="222"/>
    </location>
    <ligand>
        <name>Zn(2+)</name>
        <dbReference type="ChEBI" id="CHEBI:29105"/>
        <note>catalytic</note>
    </ligand>
</feature>
<accession>B5R2S7</accession>
<comment type="cofactor">
    <cofactor evidence="1">
        <name>Zn(2+)</name>
        <dbReference type="ChEBI" id="CHEBI:29105"/>
    </cofactor>
    <text evidence="1">Binds 1 zinc ion per subunit.</text>
</comment>
<comment type="subcellular location">
    <subcellularLocation>
        <location evidence="1">Cell inner membrane</location>
        <topology evidence="1">Multi-pass membrane protein</topology>
    </subcellularLocation>
</comment>
<comment type="similarity">
    <text evidence="1">Belongs to the peptidase M48B family.</text>
</comment>
<organism>
    <name type="scientific">Salmonella enteritidis PT4 (strain P125109)</name>
    <dbReference type="NCBI Taxonomy" id="550537"/>
    <lineage>
        <taxon>Bacteria</taxon>
        <taxon>Pseudomonadati</taxon>
        <taxon>Pseudomonadota</taxon>
        <taxon>Gammaproteobacteria</taxon>
        <taxon>Enterobacterales</taxon>
        <taxon>Enterobacteriaceae</taxon>
        <taxon>Salmonella</taxon>
    </lineage>
</organism>
<gene>
    <name evidence="1" type="primary">htpX</name>
    <name type="ordered locus">SEN1193</name>
</gene>
<proteinExistence type="inferred from homology"/>